<proteinExistence type="inferred from homology"/>
<keyword id="KW-0067">ATP-binding</keyword>
<keyword id="KW-1003">Cell membrane</keyword>
<keyword id="KW-0406">Ion transport</keyword>
<keyword id="KW-0472">Membrane</keyword>
<keyword id="KW-0533">Nickel</keyword>
<keyword id="KW-0921">Nickel transport</keyword>
<keyword id="KW-0547">Nucleotide-binding</keyword>
<keyword id="KW-1278">Translocase</keyword>
<keyword id="KW-0813">Transport</keyword>
<organism>
    <name type="scientific">Staphylococcus aureus (strain MSSA476)</name>
    <dbReference type="NCBI Taxonomy" id="282459"/>
    <lineage>
        <taxon>Bacteria</taxon>
        <taxon>Bacillati</taxon>
        <taxon>Bacillota</taxon>
        <taxon>Bacilli</taxon>
        <taxon>Bacillales</taxon>
        <taxon>Staphylococcaceae</taxon>
        <taxon>Staphylococcus</taxon>
    </lineage>
</organism>
<reference key="1">
    <citation type="journal article" date="2004" name="Proc. Natl. Acad. Sci. U.S.A.">
        <title>Complete genomes of two clinical Staphylococcus aureus strains: evidence for the rapid evolution of virulence and drug resistance.</title>
        <authorList>
            <person name="Holden M.T.G."/>
            <person name="Feil E.J."/>
            <person name="Lindsay J.A."/>
            <person name="Peacock S.J."/>
            <person name="Day N.P.J."/>
            <person name="Enright M.C."/>
            <person name="Foster T.J."/>
            <person name="Moore C.E."/>
            <person name="Hurst L."/>
            <person name="Atkin R."/>
            <person name="Barron A."/>
            <person name="Bason N."/>
            <person name="Bentley S.D."/>
            <person name="Chillingworth C."/>
            <person name="Chillingworth T."/>
            <person name="Churcher C."/>
            <person name="Clark L."/>
            <person name="Corton C."/>
            <person name="Cronin A."/>
            <person name="Doggett J."/>
            <person name="Dowd L."/>
            <person name="Feltwell T."/>
            <person name="Hance Z."/>
            <person name="Harris B."/>
            <person name="Hauser H."/>
            <person name="Holroyd S."/>
            <person name="Jagels K."/>
            <person name="James K.D."/>
            <person name="Lennard N."/>
            <person name="Line A."/>
            <person name="Mayes R."/>
            <person name="Moule S."/>
            <person name="Mungall K."/>
            <person name="Ormond D."/>
            <person name="Quail M.A."/>
            <person name="Rabbinowitsch E."/>
            <person name="Rutherford K.M."/>
            <person name="Sanders M."/>
            <person name="Sharp S."/>
            <person name="Simmonds M."/>
            <person name="Stevens K."/>
            <person name="Whitehead S."/>
            <person name="Barrell B.G."/>
            <person name="Spratt B.G."/>
            <person name="Parkhill J."/>
        </authorList>
    </citation>
    <scope>NUCLEOTIDE SEQUENCE [LARGE SCALE GENOMIC DNA]</scope>
    <source>
        <strain>MSSA476</strain>
    </source>
</reference>
<accession>Q6G9I0</accession>
<sequence length="257" mass="29549">MSLIDIQNLTIKNTSEKSLIKGIDLKIFSQQINALIGESGAGKSLIAKALLEYLPFDLSCTYDSYQFDGENVSRLSQYYGHTIGYISQNYAESFNDHTKLGKQLTAIYRKHYKGSKEEALSKVDKALSWVNLQSKDILNKYSFQLSGGQLERVYIASVLMLEPKLIIADEPVASLDALNGNQVMDLLQHIVLEHGQTLFIITHNLSHVLKYCQYIYVLKEGQIIERGNINHFKYEHLHPYTERLIKYRTQLKRDYYD</sequence>
<dbReference type="EC" id="7.2.2.11" evidence="1"/>
<dbReference type="EMBL" id="BX571857">
    <property type="protein sequence ID" value="CAG43097.1"/>
    <property type="molecule type" value="Genomic_DNA"/>
</dbReference>
<dbReference type="RefSeq" id="WP_000052317.1">
    <property type="nucleotide sequence ID" value="NC_002953.3"/>
</dbReference>
<dbReference type="SMR" id="Q6G9I0"/>
<dbReference type="KEGG" id="sas:SAS1321"/>
<dbReference type="HOGENOM" id="CLU_000604_1_23_9"/>
<dbReference type="GO" id="GO:0005886">
    <property type="term" value="C:plasma membrane"/>
    <property type="evidence" value="ECO:0007669"/>
    <property type="project" value="UniProtKB-SubCell"/>
</dbReference>
<dbReference type="GO" id="GO:0015413">
    <property type="term" value="F:ABC-type nickel transporter activity"/>
    <property type="evidence" value="ECO:0007669"/>
    <property type="project" value="UniProtKB-EC"/>
</dbReference>
<dbReference type="GO" id="GO:0005524">
    <property type="term" value="F:ATP binding"/>
    <property type="evidence" value="ECO:0007669"/>
    <property type="project" value="UniProtKB-KW"/>
</dbReference>
<dbReference type="GO" id="GO:0016887">
    <property type="term" value="F:ATP hydrolysis activity"/>
    <property type="evidence" value="ECO:0007669"/>
    <property type="project" value="InterPro"/>
</dbReference>
<dbReference type="FunFam" id="3.40.50.300:FF:001826">
    <property type="entry name" value="Nickel import system ATP-binding protein NikD"/>
    <property type="match status" value="1"/>
</dbReference>
<dbReference type="Gene3D" id="3.40.50.300">
    <property type="entry name" value="P-loop containing nucleotide triphosphate hydrolases"/>
    <property type="match status" value="1"/>
</dbReference>
<dbReference type="InterPro" id="IPR003593">
    <property type="entry name" value="AAA+_ATPase"/>
</dbReference>
<dbReference type="InterPro" id="IPR050388">
    <property type="entry name" value="ABC_Ni/Peptide_Import"/>
</dbReference>
<dbReference type="InterPro" id="IPR003439">
    <property type="entry name" value="ABC_transporter-like_ATP-bd"/>
</dbReference>
<dbReference type="InterPro" id="IPR027417">
    <property type="entry name" value="P-loop_NTPase"/>
</dbReference>
<dbReference type="PANTHER" id="PTHR43297:SF13">
    <property type="entry name" value="NICKEL ABC TRANSPORTER, ATP-BINDING PROTEIN"/>
    <property type="match status" value="1"/>
</dbReference>
<dbReference type="PANTHER" id="PTHR43297">
    <property type="entry name" value="OLIGOPEPTIDE TRANSPORT ATP-BINDING PROTEIN APPD"/>
    <property type="match status" value="1"/>
</dbReference>
<dbReference type="Pfam" id="PF00005">
    <property type="entry name" value="ABC_tran"/>
    <property type="match status" value="1"/>
</dbReference>
<dbReference type="SMART" id="SM00382">
    <property type="entry name" value="AAA"/>
    <property type="match status" value="1"/>
</dbReference>
<dbReference type="SUPFAM" id="SSF52540">
    <property type="entry name" value="P-loop containing nucleoside triphosphate hydrolases"/>
    <property type="match status" value="1"/>
</dbReference>
<dbReference type="PROSITE" id="PS50893">
    <property type="entry name" value="ABC_TRANSPORTER_2"/>
    <property type="match status" value="1"/>
</dbReference>
<evidence type="ECO:0000250" key="1">
    <source>
        <dbReference type="UniProtKB" id="Q2FYQ7"/>
    </source>
</evidence>
<evidence type="ECO:0000255" key="2">
    <source>
        <dbReference type="PROSITE-ProRule" id="PRU00434"/>
    </source>
</evidence>
<evidence type="ECO:0000305" key="3"/>
<comment type="function">
    <text evidence="1">Part of the ABC transporter complex NikABCDE (Opp2) involved in nickel import. Probably responsible for energy coupling to the transport system.</text>
</comment>
<comment type="catalytic activity">
    <reaction evidence="1">
        <text>Ni(2+)(out) + ATP + H2O = Ni(2+)(in) + ADP + phosphate + H(+)</text>
        <dbReference type="Rhea" id="RHEA:15557"/>
        <dbReference type="ChEBI" id="CHEBI:15377"/>
        <dbReference type="ChEBI" id="CHEBI:15378"/>
        <dbReference type="ChEBI" id="CHEBI:30616"/>
        <dbReference type="ChEBI" id="CHEBI:43474"/>
        <dbReference type="ChEBI" id="CHEBI:49786"/>
        <dbReference type="ChEBI" id="CHEBI:456216"/>
        <dbReference type="EC" id="7.2.2.11"/>
    </reaction>
    <physiologicalReaction direction="left-to-right" evidence="1">
        <dbReference type="Rhea" id="RHEA:15558"/>
    </physiologicalReaction>
</comment>
<comment type="subunit">
    <text evidence="1">The complex is composed of two ATP-binding proteins (NikD and NikE), two transmembrane proteins (NikB and NikC) and a solute-binding protein (NikA).</text>
</comment>
<comment type="subcellular location">
    <subcellularLocation>
        <location evidence="3">Cell membrane</location>
        <topology evidence="3">Peripheral membrane protein</topology>
    </subcellularLocation>
</comment>
<comment type="similarity">
    <text evidence="3">Belongs to the ABC transporter superfamily.</text>
</comment>
<name>NIKD_STAAS</name>
<gene>
    <name evidence="1" type="primary">nikD</name>
    <name type="synonym">oppD2</name>
    <name type="ordered locus">SAS1321</name>
</gene>
<feature type="chain" id="PRO_0000276795" description="Nickel import system ATP-binding protein NikD">
    <location>
        <begin position="1"/>
        <end position="257"/>
    </location>
</feature>
<feature type="domain" description="ABC transporter" evidence="2">
    <location>
        <begin position="4"/>
        <end position="245"/>
    </location>
</feature>
<feature type="binding site" evidence="2">
    <location>
        <begin position="37"/>
        <end position="44"/>
    </location>
    <ligand>
        <name>ATP</name>
        <dbReference type="ChEBI" id="CHEBI:30616"/>
    </ligand>
</feature>
<protein>
    <recommendedName>
        <fullName evidence="1">Nickel import system ATP-binding protein NikD</fullName>
        <ecNumber evidence="1">7.2.2.11</ecNumber>
    </recommendedName>
</protein>